<dbReference type="EMBL" id="CP001616">
    <property type="protein sequence ID" value="ACQ91967.1"/>
    <property type="molecule type" value="Genomic_DNA"/>
</dbReference>
<dbReference type="RefSeq" id="WP_012728566.1">
    <property type="nucleotide sequence ID" value="NC_012691.1"/>
</dbReference>
<dbReference type="SMR" id="C4L968"/>
<dbReference type="STRING" id="595494.Tola_0337"/>
<dbReference type="KEGG" id="tau:Tola_0337"/>
<dbReference type="eggNOG" id="COG0218">
    <property type="taxonomic scope" value="Bacteria"/>
</dbReference>
<dbReference type="HOGENOM" id="CLU_033732_1_0_6"/>
<dbReference type="OrthoDB" id="9804921at2"/>
<dbReference type="Proteomes" id="UP000009073">
    <property type="component" value="Chromosome"/>
</dbReference>
<dbReference type="GO" id="GO:0005829">
    <property type="term" value="C:cytosol"/>
    <property type="evidence" value="ECO:0007669"/>
    <property type="project" value="TreeGrafter"/>
</dbReference>
<dbReference type="GO" id="GO:0005525">
    <property type="term" value="F:GTP binding"/>
    <property type="evidence" value="ECO:0007669"/>
    <property type="project" value="UniProtKB-UniRule"/>
</dbReference>
<dbReference type="GO" id="GO:0046872">
    <property type="term" value="F:metal ion binding"/>
    <property type="evidence" value="ECO:0007669"/>
    <property type="project" value="UniProtKB-KW"/>
</dbReference>
<dbReference type="GO" id="GO:0000917">
    <property type="term" value="P:division septum assembly"/>
    <property type="evidence" value="ECO:0007669"/>
    <property type="project" value="UniProtKB-KW"/>
</dbReference>
<dbReference type="CDD" id="cd01876">
    <property type="entry name" value="YihA_EngB"/>
    <property type="match status" value="1"/>
</dbReference>
<dbReference type="FunFam" id="3.40.50.300:FF:000098">
    <property type="entry name" value="Probable GTP-binding protein EngB"/>
    <property type="match status" value="1"/>
</dbReference>
<dbReference type="Gene3D" id="3.40.50.300">
    <property type="entry name" value="P-loop containing nucleotide triphosphate hydrolases"/>
    <property type="match status" value="1"/>
</dbReference>
<dbReference type="HAMAP" id="MF_00321">
    <property type="entry name" value="GTPase_EngB"/>
    <property type="match status" value="1"/>
</dbReference>
<dbReference type="InterPro" id="IPR030393">
    <property type="entry name" value="G_ENGB_dom"/>
</dbReference>
<dbReference type="InterPro" id="IPR006073">
    <property type="entry name" value="GTP-bd"/>
</dbReference>
<dbReference type="InterPro" id="IPR019987">
    <property type="entry name" value="GTP-bd_ribosome_bio_YsxC"/>
</dbReference>
<dbReference type="InterPro" id="IPR027417">
    <property type="entry name" value="P-loop_NTPase"/>
</dbReference>
<dbReference type="NCBIfam" id="TIGR03598">
    <property type="entry name" value="GTPase_YsxC"/>
    <property type="match status" value="1"/>
</dbReference>
<dbReference type="PANTHER" id="PTHR11649:SF13">
    <property type="entry name" value="ENGB-TYPE G DOMAIN-CONTAINING PROTEIN"/>
    <property type="match status" value="1"/>
</dbReference>
<dbReference type="PANTHER" id="PTHR11649">
    <property type="entry name" value="MSS1/TRME-RELATED GTP-BINDING PROTEIN"/>
    <property type="match status" value="1"/>
</dbReference>
<dbReference type="Pfam" id="PF01926">
    <property type="entry name" value="MMR_HSR1"/>
    <property type="match status" value="1"/>
</dbReference>
<dbReference type="SUPFAM" id="SSF52540">
    <property type="entry name" value="P-loop containing nucleoside triphosphate hydrolases"/>
    <property type="match status" value="1"/>
</dbReference>
<dbReference type="PROSITE" id="PS51706">
    <property type="entry name" value="G_ENGB"/>
    <property type="match status" value="1"/>
</dbReference>
<comment type="function">
    <text evidence="1">Necessary for normal cell division and for the maintenance of normal septation.</text>
</comment>
<comment type="cofactor">
    <cofactor evidence="1">
        <name>Mg(2+)</name>
        <dbReference type="ChEBI" id="CHEBI:18420"/>
    </cofactor>
</comment>
<comment type="similarity">
    <text evidence="1">Belongs to the TRAFAC class TrmE-Era-EngA-EngB-Septin-like GTPase superfamily. EngB GTPase family.</text>
</comment>
<feature type="chain" id="PRO_1000205140" description="Probable GTP-binding protein EngB">
    <location>
        <begin position="1"/>
        <end position="212"/>
    </location>
</feature>
<feature type="domain" description="EngB-type G" evidence="1">
    <location>
        <begin position="27"/>
        <end position="201"/>
    </location>
</feature>
<feature type="binding site" evidence="1">
    <location>
        <begin position="35"/>
        <end position="42"/>
    </location>
    <ligand>
        <name>GTP</name>
        <dbReference type="ChEBI" id="CHEBI:37565"/>
    </ligand>
</feature>
<feature type="binding site" evidence="1">
    <location>
        <position position="42"/>
    </location>
    <ligand>
        <name>Mg(2+)</name>
        <dbReference type="ChEBI" id="CHEBI:18420"/>
    </ligand>
</feature>
<feature type="binding site" evidence="1">
    <location>
        <begin position="62"/>
        <end position="66"/>
    </location>
    <ligand>
        <name>GTP</name>
        <dbReference type="ChEBI" id="CHEBI:37565"/>
    </ligand>
</feature>
<feature type="binding site" evidence="1">
    <location>
        <position position="64"/>
    </location>
    <ligand>
        <name>Mg(2+)</name>
        <dbReference type="ChEBI" id="CHEBI:18420"/>
    </ligand>
</feature>
<feature type="binding site" evidence="1">
    <location>
        <begin position="80"/>
        <end position="83"/>
    </location>
    <ligand>
        <name>GTP</name>
        <dbReference type="ChEBI" id="CHEBI:37565"/>
    </ligand>
</feature>
<feature type="binding site" evidence="1">
    <location>
        <begin position="147"/>
        <end position="150"/>
    </location>
    <ligand>
        <name>GTP</name>
        <dbReference type="ChEBI" id="CHEBI:37565"/>
    </ligand>
</feature>
<feature type="binding site" evidence="1">
    <location>
        <begin position="180"/>
        <end position="182"/>
    </location>
    <ligand>
        <name>GTP</name>
        <dbReference type="ChEBI" id="CHEBI:37565"/>
    </ligand>
</feature>
<protein>
    <recommendedName>
        <fullName evidence="1">Probable GTP-binding protein EngB</fullName>
    </recommendedName>
</protein>
<keyword id="KW-0131">Cell cycle</keyword>
<keyword id="KW-0132">Cell division</keyword>
<keyword id="KW-0342">GTP-binding</keyword>
<keyword id="KW-0460">Magnesium</keyword>
<keyword id="KW-0479">Metal-binding</keyword>
<keyword id="KW-0547">Nucleotide-binding</keyword>
<keyword id="KW-1185">Reference proteome</keyword>
<keyword id="KW-0717">Septation</keyword>
<reference key="1">
    <citation type="submission" date="2009-05" db="EMBL/GenBank/DDBJ databases">
        <title>Complete sequence of Tolumonas auensis DSM 9187.</title>
        <authorList>
            <consortium name="US DOE Joint Genome Institute"/>
            <person name="Lucas S."/>
            <person name="Copeland A."/>
            <person name="Lapidus A."/>
            <person name="Glavina del Rio T."/>
            <person name="Tice H."/>
            <person name="Bruce D."/>
            <person name="Goodwin L."/>
            <person name="Pitluck S."/>
            <person name="Chertkov O."/>
            <person name="Brettin T."/>
            <person name="Detter J.C."/>
            <person name="Han C."/>
            <person name="Larimer F."/>
            <person name="Land M."/>
            <person name="Hauser L."/>
            <person name="Kyrpides N."/>
            <person name="Mikhailova N."/>
            <person name="Spring S."/>
            <person name="Beller H."/>
        </authorList>
    </citation>
    <scope>NUCLEOTIDE SEQUENCE [LARGE SCALE GENOMIC DNA]</scope>
    <source>
        <strain>DSM 9187 / NBRC 110442 / TA 4</strain>
    </source>
</reference>
<gene>
    <name evidence="1" type="primary">engB</name>
    <name type="ordered locus">Tola_0337</name>
</gene>
<evidence type="ECO:0000255" key="1">
    <source>
        <dbReference type="HAMAP-Rule" id="MF_00321"/>
    </source>
</evidence>
<accession>C4L968</accession>
<proteinExistence type="inferred from homology"/>
<organism>
    <name type="scientific">Tolumonas auensis (strain DSM 9187 / NBRC 110442 / TA 4)</name>
    <dbReference type="NCBI Taxonomy" id="595494"/>
    <lineage>
        <taxon>Bacteria</taxon>
        <taxon>Pseudomonadati</taxon>
        <taxon>Pseudomonadota</taxon>
        <taxon>Gammaproteobacteria</taxon>
        <taxon>Aeromonadales</taxon>
        <taxon>Aeromonadaceae</taxon>
        <taxon>Tolumonas</taxon>
    </lineage>
</organism>
<name>ENGB_TOLAT</name>
<sequence length="212" mass="23724">MDTPLLNFRKVHFVTSAPDIRHLPNDGGIEIAFAGRSNAGKSSALNALTQQRQLARTSKTPGRTQLINLFELEPGKRLVDLPGYGYAQVPIEMKLKWQAALSEYLQKRESLKALVLLMDIRHPLKDLDLQMLEWASNSDLNILVLLTKADKLNPGPRKTVVQQVRKATMVFGDSVRVEAFSSLKGTGVDEVTRILSDWYQPEDTPDEISEAE</sequence>